<reference key="1">
    <citation type="journal article" date="1997" name="Microbiology">
        <title>Sequence of the Bacillus subtilis genome region in the vicinity of the lev operon reveals two new extracytoplasmic function RNA polymerase sigma factors SigV and SigZ.</title>
        <authorList>
            <person name="Sorokin A."/>
            <person name="Bolotin A."/>
            <person name="Purnelle B."/>
            <person name="Hilbert H."/>
            <person name="Lauber J."/>
            <person name="Duesterhoeft A."/>
            <person name="Ehrlich S.D."/>
        </authorList>
    </citation>
    <scope>NUCLEOTIDE SEQUENCE [GENOMIC DNA]</scope>
    <source>
        <strain>168</strain>
    </source>
</reference>
<reference key="2">
    <citation type="journal article" date="1997" name="Nature">
        <title>The complete genome sequence of the Gram-positive bacterium Bacillus subtilis.</title>
        <authorList>
            <person name="Kunst F."/>
            <person name="Ogasawara N."/>
            <person name="Moszer I."/>
            <person name="Albertini A.M."/>
            <person name="Alloni G."/>
            <person name="Azevedo V."/>
            <person name="Bertero M.G."/>
            <person name="Bessieres P."/>
            <person name="Bolotin A."/>
            <person name="Borchert S."/>
            <person name="Borriss R."/>
            <person name="Boursier L."/>
            <person name="Brans A."/>
            <person name="Braun M."/>
            <person name="Brignell S.C."/>
            <person name="Bron S."/>
            <person name="Brouillet S."/>
            <person name="Bruschi C.V."/>
            <person name="Caldwell B."/>
            <person name="Capuano V."/>
            <person name="Carter N.M."/>
            <person name="Choi S.-K."/>
            <person name="Codani J.-J."/>
            <person name="Connerton I.F."/>
            <person name="Cummings N.J."/>
            <person name="Daniel R.A."/>
            <person name="Denizot F."/>
            <person name="Devine K.M."/>
            <person name="Duesterhoeft A."/>
            <person name="Ehrlich S.D."/>
            <person name="Emmerson P.T."/>
            <person name="Entian K.-D."/>
            <person name="Errington J."/>
            <person name="Fabret C."/>
            <person name="Ferrari E."/>
            <person name="Foulger D."/>
            <person name="Fritz C."/>
            <person name="Fujita M."/>
            <person name="Fujita Y."/>
            <person name="Fuma S."/>
            <person name="Galizzi A."/>
            <person name="Galleron N."/>
            <person name="Ghim S.-Y."/>
            <person name="Glaser P."/>
            <person name="Goffeau A."/>
            <person name="Golightly E.J."/>
            <person name="Grandi G."/>
            <person name="Guiseppi G."/>
            <person name="Guy B.J."/>
            <person name="Haga K."/>
            <person name="Haiech J."/>
            <person name="Harwood C.R."/>
            <person name="Henaut A."/>
            <person name="Hilbert H."/>
            <person name="Holsappel S."/>
            <person name="Hosono S."/>
            <person name="Hullo M.-F."/>
            <person name="Itaya M."/>
            <person name="Jones L.-M."/>
            <person name="Joris B."/>
            <person name="Karamata D."/>
            <person name="Kasahara Y."/>
            <person name="Klaerr-Blanchard M."/>
            <person name="Klein C."/>
            <person name="Kobayashi Y."/>
            <person name="Koetter P."/>
            <person name="Koningstein G."/>
            <person name="Krogh S."/>
            <person name="Kumano M."/>
            <person name="Kurita K."/>
            <person name="Lapidus A."/>
            <person name="Lardinois S."/>
            <person name="Lauber J."/>
            <person name="Lazarevic V."/>
            <person name="Lee S.-M."/>
            <person name="Levine A."/>
            <person name="Liu H."/>
            <person name="Masuda S."/>
            <person name="Mauel C."/>
            <person name="Medigue C."/>
            <person name="Medina N."/>
            <person name="Mellado R.P."/>
            <person name="Mizuno M."/>
            <person name="Moestl D."/>
            <person name="Nakai S."/>
            <person name="Noback M."/>
            <person name="Noone D."/>
            <person name="O'Reilly M."/>
            <person name="Ogawa K."/>
            <person name="Ogiwara A."/>
            <person name="Oudega B."/>
            <person name="Park S.-H."/>
            <person name="Parro V."/>
            <person name="Pohl T.M."/>
            <person name="Portetelle D."/>
            <person name="Porwollik S."/>
            <person name="Prescott A.M."/>
            <person name="Presecan E."/>
            <person name="Pujic P."/>
            <person name="Purnelle B."/>
            <person name="Rapoport G."/>
            <person name="Rey M."/>
            <person name="Reynolds S."/>
            <person name="Rieger M."/>
            <person name="Rivolta C."/>
            <person name="Rocha E."/>
            <person name="Roche B."/>
            <person name="Rose M."/>
            <person name="Sadaie Y."/>
            <person name="Sato T."/>
            <person name="Scanlan E."/>
            <person name="Schleich S."/>
            <person name="Schroeter R."/>
            <person name="Scoffone F."/>
            <person name="Sekiguchi J."/>
            <person name="Sekowska A."/>
            <person name="Seror S.J."/>
            <person name="Serror P."/>
            <person name="Shin B.-S."/>
            <person name="Soldo B."/>
            <person name="Sorokin A."/>
            <person name="Tacconi E."/>
            <person name="Takagi T."/>
            <person name="Takahashi H."/>
            <person name="Takemaru K."/>
            <person name="Takeuchi M."/>
            <person name="Tamakoshi A."/>
            <person name="Tanaka T."/>
            <person name="Terpstra P."/>
            <person name="Tognoni A."/>
            <person name="Tosato V."/>
            <person name="Uchiyama S."/>
            <person name="Vandenbol M."/>
            <person name="Vannier F."/>
            <person name="Vassarotti A."/>
            <person name="Viari A."/>
            <person name="Wambutt R."/>
            <person name="Wedler E."/>
            <person name="Wedler H."/>
            <person name="Weitzenegger T."/>
            <person name="Winters P."/>
            <person name="Wipat A."/>
            <person name="Yamamoto H."/>
            <person name="Yamane K."/>
            <person name="Yasumoto K."/>
            <person name="Yata K."/>
            <person name="Yoshida K."/>
            <person name="Yoshikawa H.-F."/>
            <person name="Zumstein E."/>
            <person name="Yoshikawa H."/>
            <person name="Danchin A."/>
        </authorList>
    </citation>
    <scope>NUCLEOTIDE SEQUENCE [LARGE SCALE GENOMIC DNA]</scope>
    <source>
        <strain>168</strain>
    </source>
</reference>
<reference key="3">
    <citation type="journal article" date="2007" name="J. Bacteriol.">
        <title>Conversion of methionine to cysteine in Bacillus subtilis and its regulation.</title>
        <authorList>
            <person name="Hullo M.-F."/>
            <person name="Auger S."/>
            <person name="Soutourina O."/>
            <person name="Barzu O."/>
            <person name="Yvon M."/>
            <person name="Danchin A."/>
            <person name="Martin-Verstraete I."/>
        </authorList>
    </citation>
    <scope>FUNCTION</scope>
    <scope>CATALYTIC ACTIVITY</scope>
    <scope>BIOPHYSICOCHEMICAL PROPERTIES</scope>
    <scope>INDUCTION</scope>
    <scope>DISRUPTION PHENOTYPE</scope>
    <source>
        <strain>168</strain>
    </source>
</reference>
<organism>
    <name type="scientific">Bacillus subtilis (strain 168)</name>
    <dbReference type="NCBI Taxonomy" id="224308"/>
    <lineage>
        <taxon>Bacteria</taxon>
        <taxon>Bacillati</taxon>
        <taxon>Bacillota</taxon>
        <taxon>Bacilli</taxon>
        <taxon>Bacillales</taxon>
        <taxon>Bacillaceae</taxon>
        <taxon>Bacillus</taxon>
    </lineage>
</organism>
<feature type="chain" id="PRO_0000360652" description="Cystathionine gamma-lyase">
    <location>
        <begin position="1"/>
        <end position="379"/>
    </location>
</feature>
<feature type="modified residue" description="N6-(pyridoxal phosphate)lysine" evidence="1">
    <location>
        <position position="195"/>
    </location>
</feature>
<gene>
    <name type="primary">mccB</name>
    <name type="synonym">yrhB</name>
    <name type="ordered locus">BSU27250</name>
</gene>
<proteinExistence type="evidence at protein level"/>
<sequence>MKKKTLMIHGGITGDEKTGAVSVPIYQVSTYKQPKAGQHTGYEYSRTANPTRTALEALVTELESGEAGYAFSSGMAAITAVMMLFNSGDHVVLTDDVYGGTYRVMTKVLNRLGIESTFVDTSSREEVEKAIRPNTKAIYIETPTNPLLKITDLTLMADIAKKAGVLLIVDNTFNTPYFQQPLTLGADIVLHSATKYLGGHSDVVGGLVVTASKELGEELHFVQNSTGGVLGPQDSWLLMRGIKTLGLRMEAIDQNARKIASFLENHPAVQTLYYPGSSNHPGHELAKTQGAGFGGMISFDIGSEERVDAFLGNLKLFTIAESLGAVESLISVPARMTHASIPRERRLELGITDGLIRISVGIEDAEDLLEDIGQALENI</sequence>
<keyword id="KW-0456">Lyase</keyword>
<keyword id="KW-0663">Pyridoxal phosphate</keyword>
<keyword id="KW-1185">Reference proteome</keyword>
<dbReference type="EC" id="4.4.1.1"/>
<dbReference type="EC" id="4.4.1.2"/>
<dbReference type="EMBL" id="U93874">
    <property type="protein sequence ID" value="AAB80859.1"/>
    <property type="molecule type" value="Genomic_DNA"/>
</dbReference>
<dbReference type="EMBL" id="AL009126">
    <property type="protein sequence ID" value="CAB14667.1"/>
    <property type="molecule type" value="Genomic_DNA"/>
</dbReference>
<dbReference type="PIR" id="A69974">
    <property type="entry name" value="A69974"/>
</dbReference>
<dbReference type="RefSeq" id="NP_390603.1">
    <property type="nucleotide sequence ID" value="NC_000964.3"/>
</dbReference>
<dbReference type="RefSeq" id="WP_003229810.1">
    <property type="nucleotide sequence ID" value="NZ_OZ025638.1"/>
</dbReference>
<dbReference type="SMR" id="O05394"/>
<dbReference type="FunCoup" id="O05394">
    <property type="interactions" value="649"/>
</dbReference>
<dbReference type="STRING" id="224308.BSU27250"/>
<dbReference type="PaxDb" id="224308-BSU27250"/>
<dbReference type="EnsemblBacteria" id="CAB14667">
    <property type="protein sequence ID" value="CAB14667"/>
    <property type="gene ID" value="BSU_27250"/>
</dbReference>
<dbReference type="GeneID" id="936947"/>
<dbReference type="KEGG" id="bsu:BSU27250"/>
<dbReference type="PATRIC" id="fig|224308.179.peg.2961"/>
<dbReference type="eggNOG" id="COG0626">
    <property type="taxonomic scope" value="Bacteria"/>
</dbReference>
<dbReference type="InParanoid" id="O05394"/>
<dbReference type="OrthoDB" id="9803887at2"/>
<dbReference type="PhylomeDB" id="O05394"/>
<dbReference type="BioCyc" id="BSUB:BSU27250-MONOMER"/>
<dbReference type="BRENDA" id="2.5.1.134">
    <property type="organism ID" value="658"/>
</dbReference>
<dbReference type="SABIO-RK" id="O05394"/>
<dbReference type="Proteomes" id="UP000001570">
    <property type="component" value="Chromosome"/>
</dbReference>
<dbReference type="GO" id="GO:0005737">
    <property type="term" value="C:cytoplasm"/>
    <property type="evidence" value="ECO:0000318"/>
    <property type="project" value="GO_Central"/>
</dbReference>
<dbReference type="GO" id="GO:0004123">
    <property type="term" value="F:cystathionine gamma-lyase activity"/>
    <property type="evidence" value="ECO:0000314"/>
    <property type="project" value="CAFA"/>
</dbReference>
<dbReference type="GO" id="GO:0003962">
    <property type="term" value="F:cystathionine gamma-synthase activity"/>
    <property type="evidence" value="ECO:0000318"/>
    <property type="project" value="GO_Central"/>
</dbReference>
<dbReference type="GO" id="GO:0047982">
    <property type="term" value="F:homocysteine desulfhydrase activity"/>
    <property type="evidence" value="ECO:0007669"/>
    <property type="project" value="UniProtKB-EC"/>
</dbReference>
<dbReference type="GO" id="GO:0030170">
    <property type="term" value="F:pyridoxal phosphate binding"/>
    <property type="evidence" value="ECO:0000318"/>
    <property type="project" value="GO_Central"/>
</dbReference>
<dbReference type="GO" id="GO:0019343">
    <property type="term" value="P:cysteine biosynthetic process via cystathionine"/>
    <property type="evidence" value="ECO:0000318"/>
    <property type="project" value="GO_Central"/>
</dbReference>
<dbReference type="GO" id="GO:0043418">
    <property type="term" value="P:homocysteine catabolic process"/>
    <property type="evidence" value="ECO:0000314"/>
    <property type="project" value="CAFA"/>
</dbReference>
<dbReference type="GO" id="GO:0008284">
    <property type="term" value="P:positive regulation of cell population proliferation"/>
    <property type="evidence" value="ECO:0000315"/>
    <property type="project" value="CAFA"/>
</dbReference>
<dbReference type="GO" id="GO:0019346">
    <property type="term" value="P:transsulfuration"/>
    <property type="evidence" value="ECO:0000318"/>
    <property type="project" value="GO_Central"/>
</dbReference>
<dbReference type="CDD" id="cd00614">
    <property type="entry name" value="CGS_like"/>
    <property type="match status" value="1"/>
</dbReference>
<dbReference type="FunFam" id="3.90.1150.10:FF:000008">
    <property type="entry name" value="Cystathionine gamma-synthase"/>
    <property type="match status" value="1"/>
</dbReference>
<dbReference type="FunFam" id="3.40.640.10:FF:000009">
    <property type="entry name" value="Cystathionine gamma-synthase homolog"/>
    <property type="match status" value="1"/>
</dbReference>
<dbReference type="Gene3D" id="3.90.1150.10">
    <property type="entry name" value="Aspartate Aminotransferase, domain 1"/>
    <property type="match status" value="1"/>
</dbReference>
<dbReference type="Gene3D" id="3.40.640.10">
    <property type="entry name" value="Type I PLP-dependent aspartate aminotransferase-like (Major domain)"/>
    <property type="match status" value="1"/>
</dbReference>
<dbReference type="InterPro" id="IPR000277">
    <property type="entry name" value="Cys/Met-Metab_PyrdxlP-dep_enz"/>
</dbReference>
<dbReference type="InterPro" id="IPR054542">
    <property type="entry name" value="Cys_met_metab_PP"/>
</dbReference>
<dbReference type="InterPro" id="IPR015424">
    <property type="entry name" value="PyrdxlP-dep_Trfase"/>
</dbReference>
<dbReference type="InterPro" id="IPR015421">
    <property type="entry name" value="PyrdxlP-dep_Trfase_major"/>
</dbReference>
<dbReference type="InterPro" id="IPR015422">
    <property type="entry name" value="PyrdxlP-dep_Trfase_small"/>
</dbReference>
<dbReference type="NCBIfam" id="NF005810">
    <property type="entry name" value="PRK07671.1"/>
    <property type="match status" value="1"/>
</dbReference>
<dbReference type="PANTHER" id="PTHR11808:SF15">
    <property type="entry name" value="CYSTATHIONINE GAMMA-LYASE"/>
    <property type="match status" value="1"/>
</dbReference>
<dbReference type="PANTHER" id="PTHR11808">
    <property type="entry name" value="TRANS-SULFURATION ENZYME FAMILY MEMBER"/>
    <property type="match status" value="1"/>
</dbReference>
<dbReference type="Pfam" id="PF01053">
    <property type="entry name" value="Cys_Met_Meta_PP"/>
    <property type="match status" value="1"/>
</dbReference>
<dbReference type="PIRSF" id="PIRSF001434">
    <property type="entry name" value="CGS"/>
    <property type="match status" value="1"/>
</dbReference>
<dbReference type="SUPFAM" id="SSF53383">
    <property type="entry name" value="PLP-dependent transferases"/>
    <property type="match status" value="1"/>
</dbReference>
<dbReference type="PROSITE" id="PS00868">
    <property type="entry name" value="CYS_MET_METAB_PP"/>
    <property type="match status" value="1"/>
</dbReference>
<name>MCCB_BACSU</name>
<protein>
    <recommendedName>
        <fullName>Cystathionine gamma-lyase</fullName>
        <ecNumber>4.4.1.1</ecNumber>
    </recommendedName>
    <alternativeName>
        <fullName>Gamma-cystathionase</fullName>
    </alternativeName>
    <alternativeName>
        <fullName>Homocysteine gamma-lyase</fullName>
        <ecNumber>4.4.1.2</ecNumber>
    </alternativeName>
</protein>
<comment type="function">
    <text evidence="2">Catalyzes the conversion of cystathionine to cysteine, and homocysteine to sulfide.</text>
</comment>
<comment type="catalytic activity">
    <reaction evidence="2">
        <text>L,L-cystathionine + H2O = 2-oxobutanoate + L-cysteine + NH4(+)</text>
        <dbReference type="Rhea" id="RHEA:14005"/>
        <dbReference type="ChEBI" id="CHEBI:15377"/>
        <dbReference type="ChEBI" id="CHEBI:16763"/>
        <dbReference type="ChEBI" id="CHEBI:28938"/>
        <dbReference type="ChEBI" id="CHEBI:35235"/>
        <dbReference type="ChEBI" id="CHEBI:58161"/>
        <dbReference type="EC" id="4.4.1.1"/>
    </reaction>
</comment>
<comment type="catalytic activity">
    <reaction evidence="2">
        <text>L-homocysteine + H2O = 2-oxobutanoate + hydrogen sulfide + NH4(+) + H(+)</text>
        <dbReference type="Rhea" id="RHEA:14501"/>
        <dbReference type="ChEBI" id="CHEBI:15377"/>
        <dbReference type="ChEBI" id="CHEBI:15378"/>
        <dbReference type="ChEBI" id="CHEBI:16763"/>
        <dbReference type="ChEBI" id="CHEBI:28938"/>
        <dbReference type="ChEBI" id="CHEBI:29919"/>
        <dbReference type="ChEBI" id="CHEBI:58199"/>
        <dbReference type="EC" id="4.4.1.2"/>
    </reaction>
</comment>
<comment type="cofactor">
    <cofactor evidence="1">
        <name>pyridoxal 5'-phosphate</name>
        <dbReference type="ChEBI" id="CHEBI:597326"/>
    </cofactor>
</comment>
<comment type="biophysicochemical properties">
    <kinetics>
        <KM evidence="2">3 mM for cystathionine</KM>
        <Vmax evidence="2">2.0 umol/min/mg enzyme for cystathionine gamma-lyase reaction</Vmax>
    </kinetics>
</comment>
<comment type="induction">
    <text evidence="2">By methionine. Repressed by sulfate and cysteine.</text>
</comment>
<comment type="disruption phenotype">
    <text evidence="2">No visible phenotype.</text>
</comment>
<comment type="similarity">
    <text evidence="3">Belongs to the trans-sulfuration enzymes family.</text>
</comment>
<evidence type="ECO:0000250" key="1"/>
<evidence type="ECO:0000269" key="2">
    <source>
    </source>
</evidence>
<evidence type="ECO:0000305" key="3"/>
<accession>O05394</accession>
<accession>Q795Y3</accession>